<keyword id="KW-0125">Carotenoid biosynthesis</keyword>
<keyword id="KW-0274">FAD</keyword>
<keyword id="KW-0285">Flavoprotein</keyword>
<keyword id="KW-0560">Oxidoreductase</keyword>
<keyword id="KW-0843">Virulence</keyword>
<gene>
    <name evidence="5" type="primary">crtP</name>
    <name type="ordered locus">NWMN_2464</name>
</gene>
<evidence type="ECO:0000250" key="1">
    <source>
        <dbReference type="UniProtKB" id="P21685"/>
    </source>
</evidence>
<evidence type="ECO:0000250" key="2">
    <source>
        <dbReference type="UniProtKB" id="Q2FV57"/>
    </source>
</evidence>
<evidence type="ECO:0000255" key="3"/>
<evidence type="ECO:0000269" key="4">
    <source>
    </source>
</evidence>
<evidence type="ECO:0000303" key="5">
    <source>
    </source>
</evidence>
<evidence type="ECO:0000305" key="6"/>
<dbReference type="EC" id="1.14.99.-" evidence="2"/>
<dbReference type="EMBL" id="X97985">
    <property type="protein sequence ID" value="CAA66626.1"/>
    <property type="status" value="ALT_FRAME"/>
    <property type="molecule type" value="Genomic_DNA"/>
</dbReference>
<dbReference type="EMBL" id="AP009351">
    <property type="protein sequence ID" value="BAF68736.1"/>
    <property type="molecule type" value="Genomic_DNA"/>
</dbReference>
<dbReference type="RefSeq" id="WP_000160456.1">
    <property type="nucleotide sequence ID" value="NZ_JBBIAE010000005.1"/>
</dbReference>
<dbReference type="SMR" id="Q53589"/>
<dbReference type="KEGG" id="sae:NWMN_2464"/>
<dbReference type="HOGENOM" id="CLU_019722_2_1_9"/>
<dbReference type="UniPathway" id="UPA00029">
    <property type="reaction ID" value="UER00558"/>
</dbReference>
<dbReference type="Proteomes" id="UP000006386">
    <property type="component" value="Chromosome"/>
</dbReference>
<dbReference type="GO" id="GO:0016491">
    <property type="term" value="F:oxidoreductase activity"/>
    <property type="evidence" value="ECO:0007669"/>
    <property type="project" value="UniProtKB-KW"/>
</dbReference>
<dbReference type="GO" id="GO:0016117">
    <property type="term" value="P:carotenoid biosynthetic process"/>
    <property type="evidence" value="ECO:0007669"/>
    <property type="project" value="UniProtKB-KW"/>
</dbReference>
<dbReference type="Gene3D" id="3.50.50.60">
    <property type="entry name" value="FAD/NAD(P)-binding domain"/>
    <property type="match status" value="2"/>
</dbReference>
<dbReference type="InterPro" id="IPR002937">
    <property type="entry name" value="Amino_oxidase"/>
</dbReference>
<dbReference type="InterPro" id="IPR014105">
    <property type="entry name" value="Carotenoid/retinoid_OxRdtase"/>
</dbReference>
<dbReference type="InterPro" id="IPR036188">
    <property type="entry name" value="FAD/NAD-bd_sf"/>
</dbReference>
<dbReference type="NCBIfam" id="TIGR02734">
    <property type="entry name" value="crtI_fam"/>
    <property type="match status" value="1"/>
</dbReference>
<dbReference type="PANTHER" id="PTHR43734:SF7">
    <property type="entry name" value="4,4'-DIAPONEUROSPORENE OXYGENASE"/>
    <property type="match status" value="1"/>
</dbReference>
<dbReference type="PANTHER" id="PTHR43734">
    <property type="entry name" value="PHYTOENE DESATURASE"/>
    <property type="match status" value="1"/>
</dbReference>
<dbReference type="Pfam" id="PF01593">
    <property type="entry name" value="Amino_oxidase"/>
    <property type="match status" value="1"/>
</dbReference>
<dbReference type="SUPFAM" id="SSF51905">
    <property type="entry name" value="FAD/NAD(P)-binding domain"/>
    <property type="match status" value="1"/>
</dbReference>
<sequence length="497" mass="57187">MTKHIIVIGGGLGGISAAIRMAQSGYSVSLYEQNNHIGGKVNRHESDGFGFDLGPSILTMPYIFEKLFEYSKKQMSDYVTIKRLPHQWRSFFPDGTTIDLYEGIKETGQHNAILSKQDIEELQNYLNYTRRIDRITEKGYFNYGLDTLSQIIKFHGPLNALINYDYVHTMQQAIDKRISNPYLRQMLGYFIKYVGSSSYDAPAVLSMLFHMQQEQGLWYVEGGIHHLANALEKLAREEGVTIHTGARVDNIKTYQRRVTGVRLDTGEFVKADYIISNMEVIPTYKYLIHLDTQRLNKLEREFEPASSGYVMHLGVACQYPQLAHHNFFFTENAYLNYQQVFHEKVLPDDPTIYLVNTNKTDHTQAPVGYENIKVLPHIPYIQDQPFTTEDYAKFRDKILDKLEKMGLTDLRKHIIYEDVWTPEDIEKNYRSNRGAIYGVVADKKKNKGFKFPKESQYFENLYFVGGSVNPGGGMPMVTLSGQQVADKINAREAKNRK</sequence>
<proteinExistence type="inferred from homology"/>
<comment type="function">
    <text evidence="4">Involved in the biosynthesis of the yellow-orange carotenoid staphyloxanthin, which plays a role in the virulence via its protective function against oxidative stress. Catalyzes the oxidation of the terminal methyl side group of 4,4'-diaponeurosporene to form 4,4'-diaponeurosporen-4-al.</text>
</comment>
<comment type="catalytic activity">
    <reaction>
        <text>all-trans-4,4'-diaponeurosporene + 2 AH2 + 2 O2 = 4,4'-diaponeurosporenal + 2 A + 3 H2O</text>
        <dbReference type="Rhea" id="RHEA:56104"/>
        <dbReference type="ChEBI" id="CHEBI:13193"/>
        <dbReference type="ChEBI" id="CHEBI:15377"/>
        <dbReference type="ChEBI" id="CHEBI:15379"/>
        <dbReference type="ChEBI" id="CHEBI:17499"/>
        <dbReference type="ChEBI" id="CHEBI:62743"/>
        <dbReference type="ChEBI" id="CHEBI:79065"/>
    </reaction>
</comment>
<comment type="cofactor">
    <cofactor evidence="1">
        <name>FAD</name>
        <dbReference type="ChEBI" id="CHEBI:57692"/>
    </cofactor>
</comment>
<comment type="pathway">
    <text evidence="4">Carotenoid biosynthesis; staphyloxanthin biosynthesis; staphyloxanthin from farnesyl diphosphate: step 3/5.</text>
</comment>
<comment type="similarity">
    <text evidence="6">Belongs to the carotenoid/retinoid oxidoreductase family. CrtP subfamily.</text>
</comment>
<comment type="sequence caution" evidence="6">
    <conflict type="frameshift">
        <sequence resource="EMBL-CDS" id="CAA66626"/>
    </conflict>
</comment>
<protein>
    <recommendedName>
        <fullName evidence="5">4,4'-diaponeurosporene oxygenase</fullName>
        <ecNumber evidence="2">1.14.99.-</ecNumber>
    </recommendedName>
    <alternativeName>
        <fullName evidence="5">4,4'-diaponeurosporene oxidase</fullName>
    </alternativeName>
    <alternativeName>
        <fullName evidence="2">Carotenoid oxidase</fullName>
    </alternativeName>
</protein>
<accession>Q53589</accession>
<accession>A6QK54</accession>
<feature type="chain" id="PRO_0000285223" description="4,4'-diaponeurosporene oxygenase">
    <location>
        <begin position="1"/>
        <end position="497"/>
    </location>
</feature>
<feature type="binding site" evidence="3">
    <location>
        <begin position="7"/>
        <end position="19"/>
    </location>
    <ligand>
        <name>FAD</name>
        <dbReference type="ChEBI" id="CHEBI:57692"/>
    </ligand>
</feature>
<reference key="1">
    <citation type="journal article" date="2005" name="J. Biol. Chem.">
        <title>Structure and biosynthesis of staphyloxanthin from Staphylococcus aureus.</title>
        <authorList>
            <person name="Pelz A."/>
            <person name="Wieland K.-P."/>
            <person name="Putzbach K."/>
            <person name="Hentschel P."/>
            <person name="Albert K."/>
            <person name="Goetz F."/>
        </authorList>
    </citation>
    <scope>NUCLEOTIDE SEQUENCE [GENOMIC DNA]</scope>
    <scope>FUNCTION</scope>
    <scope>PATHWAY</scope>
</reference>
<reference key="2">
    <citation type="journal article" date="2008" name="J. Bacteriol.">
        <title>Genome sequence of Staphylococcus aureus strain Newman and comparative analysis of staphylococcal genomes: polymorphism and evolution of two major pathogenicity islands.</title>
        <authorList>
            <person name="Baba T."/>
            <person name="Bae T."/>
            <person name="Schneewind O."/>
            <person name="Takeuchi F."/>
            <person name="Hiramatsu K."/>
        </authorList>
    </citation>
    <scope>NUCLEOTIDE SEQUENCE [LARGE SCALE GENOMIC DNA]</scope>
    <source>
        <strain>Newman</strain>
    </source>
</reference>
<organism>
    <name type="scientific">Staphylococcus aureus (strain Newman)</name>
    <dbReference type="NCBI Taxonomy" id="426430"/>
    <lineage>
        <taxon>Bacteria</taxon>
        <taxon>Bacillati</taxon>
        <taxon>Bacillota</taxon>
        <taxon>Bacilli</taxon>
        <taxon>Bacillales</taxon>
        <taxon>Staphylococcaceae</taxon>
        <taxon>Staphylococcus</taxon>
    </lineage>
</organism>
<name>CRTP_STAAE</name>